<evidence type="ECO:0000255" key="1">
    <source>
        <dbReference type="HAMAP-Rule" id="MF_01216"/>
    </source>
</evidence>
<protein>
    <recommendedName>
        <fullName evidence="1">FMN-dependent NADH:quinone oxidoreductase</fullName>
        <ecNumber evidence="1">1.6.5.-</ecNumber>
    </recommendedName>
    <alternativeName>
        <fullName evidence="1">Azo-dye reductase</fullName>
    </alternativeName>
    <alternativeName>
        <fullName evidence="1">FMN-dependent NADH-azo compound oxidoreductase</fullName>
    </alternativeName>
    <alternativeName>
        <fullName evidence="1">FMN-dependent NADH-azoreductase</fullName>
        <ecNumber evidence="1">1.7.1.17</ecNumber>
    </alternativeName>
</protein>
<keyword id="KW-0285">Flavoprotein</keyword>
<keyword id="KW-0288">FMN</keyword>
<keyword id="KW-0520">NAD</keyword>
<keyword id="KW-0560">Oxidoreductase</keyword>
<accession>B2V3P0</accession>
<dbReference type="EC" id="1.6.5.-" evidence="1"/>
<dbReference type="EC" id="1.7.1.17" evidence="1"/>
<dbReference type="EMBL" id="CP001078">
    <property type="protein sequence ID" value="ACD53264.1"/>
    <property type="molecule type" value="Genomic_DNA"/>
</dbReference>
<dbReference type="RefSeq" id="WP_012451209.1">
    <property type="nucleotide sequence ID" value="NC_010723.1"/>
</dbReference>
<dbReference type="SMR" id="B2V3P0"/>
<dbReference type="KEGG" id="cbt:CLH_2006"/>
<dbReference type="HOGENOM" id="CLU_088964_3_1_9"/>
<dbReference type="GO" id="GO:0009055">
    <property type="term" value="F:electron transfer activity"/>
    <property type="evidence" value="ECO:0007669"/>
    <property type="project" value="UniProtKB-UniRule"/>
</dbReference>
<dbReference type="GO" id="GO:0010181">
    <property type="term" value="F:FMN binding"/>
    <property type="evidence" value="ECO:0007669"/>
    <property type="project" value="UniProtKB-UniRule"/>
</dbReference>
<dbReference type="GO" id="GO:0016652">
    <property type="term" value="F:oxidoreductase activity, acting on NAD(P)H as acceptor"/>
    <property type="evidence" value="ECO:0007669"/>
    <property type="project" value="UniProtKB-UniRule"/>
</dbReference>
<dbReference type="GO" id="GO:0016655">
    <property type="term" value="F:oxidoreductase activity, acting on NAD(P)H, quinone or similar compound as acceptor"/>
    <property type="evidence" value="ECO:0007669"/>
    <property type="project" value="InterPro"/>
</dbReference>
<dbReference type="Gene3D" id="3.40.50.360">
    <property type="match status" value="1"/>
</dbReference>
<dbReference type="HAMAP" id="MF_01216">
    <property type="entry name" value="Azoreductase_type1"/>
    <property type="match status" value="1"/>
</dbReference>
<dbReference type="InterPro" id="IPR003680">
    <property type="entry name" value="Flavodoxin_fold"/>
</dbReference>
<dbReference type="InterPro" id="IPR029039">
    <property type="entry name" value="Flavoprotein-like_sf"/>
</dbReference>
<dbReference type="InterPro" id="IPR050104">
    <property type="entry name" value="FMN-dep_NADH:Q_OxRdtase_AzoR1"/>
</dbReference>
<dbReference type="InterPro" id="IPR023048">
    <property type="entry name" value="NADH:quinone_OxRdtase_FMN_depd"/>
</dbReference>
<dbReference type="PANTHER" id="PTHR43741">
    <property type="entry name" value="FMN-DEPENDENT NADH-AZOREDUCTASE 1"/>
    <property type="match status" value="1"/>
</dbReference>
<dbReference type="PANTHER" id="PTHR43741:SF4">
    <property type="entry name" value="FMN-DEPENDENT NADH:QUINONE OXIDOREDUCTASE"/>
    <property type="match status" value="1"/>
</dbReference>
<dbReference type="Pfam" id="PF02525">
    <property type="entry name" value="Flavodoxin_2"/>
    <property type="match status" value="1"/>
</dbReference>
<dbReference type="SUPFAM" id="SSF52218">
    <property type="entry name" value="Flavoproteins"/>
    <property type="match status" value="1"/>
</dbReference>
<organism>
    <name type="scientific">Clostridium botulinum (strain Alaska E43 / Type E3)</name>
    <dbReference type="NCBI Taxonomy" id="508767"/>
    <lineage>
        <taxon>Bacteria</taxon>
        <taxon>Bacillati</taxon>
        <taxon>Bacillota</taxon>
        <taxon>Clostridia</taxon>
        <taxon>Eubacteriales</taxon>
        <taxon>Clostridiaceae</taxon>
        <taxon>Clostridium</taxon>
    </lineage>
</organism>
<feature type="chain" id="PRO_1000138970" description="FMN-dependent NADH:quinone oxidoreductase">
    <location>
        <begin position="1"/>
        <end position="215"/>
    </location>
</feature>
<feature type="binding site" evidence="1">
    <location>
        <begin position="17"/>
        <end position="19"/>
    </location>
    <ligand>
        <name>FMN</name>
        <dbReference type="ChEBI" id="CHEBI:58210"/>
    </ligand>
</feature>
<comment type="function">
    <text evidence="1">Quinone reductase that provides resistance to thiol-specific stress caused by electrophilic quinones.</text>
</comment>
<comment type="function">
    <text evidence="1">Also exhibits azoreductase activity. Catalyzes the reductive cleavage of the azo bond in aromatic azo compounds to the corresponding amines.</text>
</comment>
<comment type="catalytic activity">
    <reaction evidence="1">
        <text>2 a quinone + NADH + H(+) = 2 a 1,4-benzosemiquinone + NAD(+)</text>
        <dbReference type="Rhea" id="RHEA:65952"/>
        <dbReference type="ChEBI" id="CHEBI:15378"/>
        <dbReference type="ChEBI" id="CHEBI:57540"/>
        <dbReference type="ChEBI" id="CHEBI:57945"/>
        <dbReference type="ChEBI" id="CHEBI:132124"/>
        <dbReference type="ChEBI" id="CHEBI:134225"/>
    </reaction>
</comment>
<comment type="catalytic activity">
    <reaction evidence="1">
        <text>N,N-dimethyl-1,4-phenylenediamine + anthranilate + 2 NAD(+) = 2-(4-dimethylaminophenyl)diazenylbenzoate + 2 NADH + 2 H(+)</text>
        <dbReference type="Rhea" id="RHEA:55872"/>
        <dbReference type="ChEBI" id="CHEBI:15378"/>
        <dbReference type="ChEBI" id="CHEBI:15783"/>
        <dbReference type="ChEBI" id="CHEBI:16567"/>
        <dbReference type="ChEBI" id="CHEBI:57540"/>
        <dbReference type="ChEBI" id="CHEBI:57945"/>
        <dbReference type="ChEBI" id="CHEBI:71579"/>
        <dbReference type="EC" id="1.7.1.17"/>
    </reaction>
</comment>
<comment type="cofactor">
    <cofactor evidence="1">
        <name>FMN</name>
        <dbReference type="ChEBI" id="CHEBI:58210"/>
    </cofactor>
    <text evidence="1">Binds 1 FMN per subunit.</text>
</comment>
<comment type="subunit">
    <text evidence="1">Homodimer.</text>
</comment>
<comment type="similarity">
    <text evidence="1">Belongs to the azoreductase type 1 family.</text>
</comment>
<name>AZOR_CLOBA</name>
<sequence length="215" mass="24726">MKKLLYITVNSKPENLSASKTVGRAFVNRFLEKHSDFEIEELDLYKCHIPRLEYEYFEKRSCLVNEDAFNKLDKKQQEEVHKIVKLTDQFKEADVYVIAAPMWSMSFPAPLKEYIDCIVMDGKTVDIKDGEKPEGLLNDKPRGAVYIQSSGAKMNVLLKMVMDKGVHYIESIMKFMGIEKFEELLVDGTGTTEEEKNKAIEKAIENIDSVIDGIW</sequence>
<reference key="1">
    <citation type="submission" date="2008-05" db="EMBL/GenBank/DDBJ databases">
        <title>Complete genome sequence of Clostridium botulinum E3 str. Alaska E43.</title>
        <authorList>
            <person name="Brinkac L.M."/>
            <person name="Brown J.L."/>
            <person name="Bruce D."/>
            <person name="Detter C."/>
            <person name="Munk C."/>
            <person name="Smith L.A."/>
            <person name="Smith T.J."/>
            <person name="Sutton G."/>
            <person name="Brettin T.S."/>
        </authorList>
    </citation>
    <scope>NUCLEOTIDE SEQUENCE [LARGE SCALE GENOMIC DNA]</scope>
    <source>
        <strain>Alaska E43 / Type E3</strain>
    </source>
</reference>
<proteinExistence type="inferred from homology"/>
<gene>
    <name evidence="1" type="primary">azoR</name>
    <name type="ordered locus">CLH_2006</name>
</gene>